<gene>
    <name type="primary">pta</name>
    <name type="ordered locus">SACOL0634</name>
</gene>
<proteinExistence type="inferred from homology"/>
<reference key="1">
    <citation type="journal article" date="2005" name="J. Bacteriol.">
        <title>Insights on evolution of virulence and resistance from the complete genome analysis of an early methicillin-resistant Staphylococcus aureus strain and a biofilm-producing methicillin-resistant Staphylococcus epidermidis strain.</title>
        <authorList>
            <person name="Gill S.R."/>
            <person name="Fouts D.E."/>
            <person name="Archer G.L."/>
            <person name="Mongodin E.F."/>
            <person name="DeBoy R.T."/>
            <person name="Ravel J."/>
            <person name="Paulsen I.T."/>
            <person name="Kolonay J.F."/>
            <person name="Brinkac L.M."/>
            <person name="Beanan M.J."/>
            <person name="Dodson R.J."/>
            <person name="Daugherty S.C."/>
            <person name="Madupu R."/>
            <person name="Angiuoli S.V."/>
            <person name="Durkin A.S."/>
            <person name="Haft D.H."/>
            <person name="Vamathevan J.J."/>
            <person name="Khouri H."/>
            <person name="Utterback T.R."/>
            <person name="Lee C."/>
            <person name="Dimitrov G."/>
            <person name="Jiang L."/>
            <person name="Qin H."/>
            <person name="Weidman J."/>
            <person name="Tran K."/>
            <person name="Kang K.H."/>
            <person name="Hance I.R."/>
            <person name="Nelson K.E."/>
            <person name="Fraser C.M."/>
        </authorList>
    </citation>
    <scope>NUCLEOTIDE SEQUENCE [LARGE SCALE GENOMIC DNA]</scope>
    <source>
        <strain>COL</strain>
    </source>
</reference>
<protein>
    <recommendedName>
        <fullName>Phosphate acetyltransferase</fullName>
        <ecNumber>2.3.1.8</ecNumber>
    </recommendedName>
    <alternativeName>
        <fullName>Phosphotransacetylase</fullName>
    </alternativeName>
</protein>
<organism>
    <name type="scientific">Staphylococcus aureus (strain COL)</name>
    <dbReference type="NCBI Taxonomy" id="93062"/>
    <lineage>
        <taxon>Bacteria</taxon>
        <taxon>Bacillati</taxon>
        <taxon>Bacillota</taxon>
        <taxon>Bacilli</taxon>
        <taxon>Bacillales</taxon>
        <taxon>Staphylococcaceae</taxon>
        <taxon>Staphylococcus</taxon>
    </lineage>
</organism>
<sequence length="328" mass="34952">MADLLNVLKDKLSGKNVKIVLPEGEDERVLTAATQLQATDYVTPIVLGDETKVQSLAQKLDLDISNIELINPATSELKAELVQSFVERRKGKATEEQAQELLNNVNYFGTMLVYAGKADGLVSGAAHSTGDTVRPALQIIKTKPGVSRTSGIFFMIKGDEQYIFGDCAINPELDSQGLAEIAVESAKSALSFGMDPKVAMLSFSTKGSAKSDDVTKVQEAVKLAQQKAEEEKLEAIIDGEFQFDAAIVPGVAEKKAPGAKLQGDANVFVFPSLEAGNIGYKIAQRLGGYDAVGPVLQGLNSPVNDLSRGCSIEDVYNLSIITAAQALQ</sequence>
<name>PTAS_STAAC</name>
<evidence type="ECO:0000305" key="1"/>
<accession>Q5HI88</accession>
<dbReference type="EC" id="2.3.1.8"/>
<dbReference type="EMBL" id="CP000046">
    <property type="protein sequence ID" value="AAW37743.1"/>
    <property type="molecule type" value="Genomic_DNA"/>
</dbReference>
<dbReference type="RefSeq" id="WP_000774281.1">
    <property type="nucleotide sequence ID" value="NZ_JBGOFO010000005.1"/>
</dbReference>
<dbReference type="SMR" id="Q5HI88"/>
<dbReference type="KEGG" id="sac:SACOL0634"/>
<dbReference type="HOGENOM" id="CLU_019723_0_1_9"/>
<dbReference type="UniPathway" id="UPA00340">
    <property type="reaction ID" value="UER00459"/>
</dbReference>
<dbReference type="Proteomes" id="UP000000530">
    <property type="component" value="Chromosome"/>
</dbReference>
<dbReference type="GO" id="GO:0005737">
    <property type="term" value="C:cytoplasm"/>
    <property type="evidence" value="ECO:0007669"/>
    <property type="project" value="UniProtKB-SubCell"/>
</dbReference>
<dbReference type="GO" id="GO:0008959">
    <property type="term" value="F:phosphate acetyltransferase activity"/>
    <property type="evidence" value="ECO:0007669"/>
    <property type="project" value="UniProtKB-EC"/>
</dbReference>
<dbReference type="GO" id="GO:0006085">
    <property type="term" value="P:acetyl-CoA biosynthetic process"/>
    <property type="evidence" value="ECO:0007669"/>
    <property type="project" value="UniProtKB-UniPathway"/>
</dbReference>
<dbReference type="Gene3D" id="3.40.50.10950">
    <property type="match status" value="1"/>
</dbReference>
<dbReference type="Gene3D" id="3.40.50.10750">
    <property type="entry name" value="Isocitrate/Isopropylmalate dehydrogenase-like"/>
    <property type="match status" value="1"/>
</dbReference>
<dbReference type="InterPro" id="IPR012147">
    <property type="entry name" value="P_Ac_Bu_trans"/>
</dbReference>
<dbReference type="InterPro" id="IPR004614">
    <property type="entry name" value="P_AcTrfase"/>
</dbReference>
<dbReference type="InterPro" id="IPR042113">
    <property type="entry name" value="P_AcTrfase_dom1"/>
</dbReference>
<dbReference type="InterPro" id="IPR042112">
    <property type="entry name" value="P_AcTrfase_dom2"/>
</dbReference>
<dbReference type="InterPro" id="IPR050500">
    <property type="entry name" value="Phos_Acetyltrans/Butyryltrans"/>
</dbReference>
<dbReference type="InterPro" id="IPR002505">
    <property type="entry name" value="PTA_PTB"/>
</dbReference>
<dbReference type="NCBIfam" id="NF007233">
    <property type="entry name" value="PRK09653.1"/>
    <property type="match status" value="1"/>
</dbReference>
<dbReference type="NCBIfam" id="TIGR00651">
    <property type="entry name" value="pta"/>
    <property type="match status" value="1"/>
</dbReference>
<dbReference type="PANTHER" id="PTHR43356">
    <property type="entry name" value="PHOSPHATE ACETYLTRANSFERASE"/>
    <property type="match status" value="1"/>
</dbReference>
<dbReference type="PANTHER" id="PTHR43356:SF3">
    <property type="entry name" value="PHOSPHATE ACETYLTRANSFERASE"/>
    <property type="match status" value="1"/>
</dbReference>
<dbReference type="Pfam" id="PF01515">
    <property type="entry name" value="PTA_PTB"/>
    <property type="match status" value="1"/>
</dbReference>
<dbReference type="PIRSF" id="PIRSF000428">
    <property type="entry name" value="P_Ac_trans"/>
    <property type="match status" value="1"/>
</dbReference>
<dbReference type="SUPFAM" id="SSF53659">
    <property type="entry name" value="Isocitrate/Isopropylmalate dehydrogenase-like"/>
    <property type="match status" value="1"/>
</dbReference>
<comment type="catalytic activity">
    <reaction>
        <text>acetyl-CoA + phosphate = acetyl phosphate + CoA</text>
        <dbReference type="Rhea" id="RHEA:19521"/>
        <dbReference type="ChEBI" id="CHEBI:22191"/>
        <dbReference type="ChEBI" id="CHEBI:43474"/>
        <dbReference type="ChEBI" id="CHEBI:57287"/>
        <dbReference type="ChEBI" id="CHEBI:57288"/>
        <dbReference type="EC" id="2.3.1.8"/>
    </reaction>
</comment>
<comment type="pathway">
    <text>Metabolic intermediate biosynthesis; acetyl-CoA biosynthesis; acetyl-CoA from acetate: step 2/2.</text>
</comment>
<comment type="subcellular location">
    <subcellularLocation>
        <location evidence="1">Cytoplasm</location>
    </subcellularLocation>
</comment>
<comment type="similarity">
    <text evidence="1">Belongs to the phosphate acetyltransferase and butyryltransferase family.</text>
</comment>
<keyword id="KW-0012">Acyltransferase</keyword>
<keyword id="KW-0963">Cytoplasm</keyword>
<keyword id="KW-0808">Transferase</keyword>
<feature type="chain" id="PRO_0000179140" description="Phosphate acetyltransferase">
    <location>
        <begin position="1"/>
        <end position="328"/>
    </location>
</feature>